<feature type="chain" id="PRO_1000059470" description="Probable GTP-binding protein EngB">
    <location>
        <begin position="1"/>
        <end position="210"/>
    </location>
</feature>
<feature type="domain" description="EngB-type G" evidence="1">
    <location>
        <begin position="25"/>
        <end position="199"/>
    </location>
</feature>
<feature type="binding site" evidence="1">
    <location>
        <begin position="33"/>
        <end position="40"/>
    </location>
    <ligand>
        <name>GTP</name>
        <dbReference type="ChEBI" id="CHEBI:37565"/>
    </ligand>
</feature>
<feature type="binding site" evidence="1">
    <location>
        <position position="40"/>
    </location>
    <ligand>
        <name>Mg(2+)</name>
        <dbReference type="ChEBI" id="CHEBI:18420"/>
    </ligand>
</feature>
<feature type="binding site" evidence="1">
    <location>
        <begin position="60"/>
        <end position="64"/>
    </location>
    <ligand>
        <name>GTP</name>
        <dbReference type="ChEBI" id="CHEBI:37565"/>
    </ligand>
</feature>
<feature type="binding site" evidence="1">
    <location>
        <position position="62"/>
    </location>
    <ligand>
        <name>Mg(2+)</name>
        <dbReference type="ChEBI" id="CHEBI:18420"/>
    </ligand>
</feature>
<feature type="binding site" evidence="1">
    <location>
        <begin position="78"/>
        <end position="81"/>
    </location>
    <ligand>
        <name>GTP</name>
        <dbReference type="ChEBI" id="CHEBI:37565"/>
    </ligand>
</feature>
<feature type="binding site" evidence="1">
    <location>
        <begin position="145"/>
        <end position="148"/>
    </location>
    <ligand>
        <name>GTP</name>
        <dbReference type="ChEBI" id="CHEBI:37565"/>
    </ligand>
</feature>
<feature type="binding site" evidence="1">
    <location>
        <begin position="178"/>
        <end position="180"/>
    </location>
    <ligand>
        <name>GTP</name>
        <dbReference type="ChEBI" id="CHEBI:37565"/>
    </ligand>
</feature>
<sequence>MTNLNYQQTHFVMSAPDIRHLPSDTGIEVAFAGRSNAGKSSALNTLTNQKSLARTSKTPGRTQLINLFEVADGKRLVDLPGYGYAEVPEEMKRKWQRALGEYLEKRQSLQGLVVLMDIRHPLKDLDQQMIEWAVDSNIAVLVLLTKADKLASGARKAQLNMVREAVLAFNGDVQVETFSSLKKQGVDKLRQKLDTWFSEMQPVEETQDGE</sequence>
<reference key="1">
    <citation type="journal article" date="2008" name="J. Bacteriol.">
        <title>The pangenome structure of Escherichia coli: comparative genomic analysis of E. coli commensal and pathogenic isolates.</title>
        <authorList>
            <person name="Rasko D.A."/>
            <person name="Rosovitz M.J."/>
            <person name="Myers G.S.A."/>
            <person name="Mongodin E.F."/>
            <person name="Fricke W.F."/>
            <person name="Gajer P."/>
            <person name="Crabtree J."/>
            <person name="Sebaihia M."/>
            <person name="Thomson N.R."/>
            <person name="Chaudhuri R."/>
            <person name="Henderson I.R."/>
            <person name="Sperandio V."/>
            <person name="Ravel J."/>
        </authorList>
    </citation>
    <scope>NUCLEOTIDE SEQUENCE [LARGE SCALE GENOMIC DNA]</scope>
    <source>
        <strain>E24377A / ETEC</strain>
    </source>
</reference>
<protein>
    <recommendedName>
        <fullName evidence="1">Probable GTP-binding protein EngB</fullName>
    </recommendedName>
</protein>
<accession>A7ZU66</accession>
<dbReference type="EMBL" id="CP000800">
    <property type="protein sequence ID" value="ABV17968.1"/>
    <property type="molecule type" value="Genomic_DNA"/>
</dbReference>
<dbReference type="SMR" id="A7ZU66"/>
<dbReference type="KEGG" id="ecw:EcE24377A_4383"/>
<dbReference type="HOGENOM" id="CLU_033732_1_2_6"/>
<dbReference type="Proteomes" id="UP000001122">
    <property type="component" value="Chromosome"/>
</dbReference>
<dbReference type="GO" id="GO:0005829">
    <property type="term" value="C:cytosol"/>
    <property type="evidence" value="ECO:0007669"/>
    <property type="project" value="TreeGrafter"/>
</dbReference>
<dbReference type="GO" id="GO:0005525">
    <property type="term" value="F:GTP binding"/>
    <property type="evidence" value="ECO:0007669"/>
    <property type="project" value="UniProtKB-UniRule"/>
</dbReference>
<dbReference type="GO" id="GO:0046872">
    <property type="term" value="F:metal ion binding"/>
    <property type="evidence" value="ECO:0007669"/>
    <property type="project" value="UniProtKB-KW"/>
</dbReference>
<dbReference type="GO" id="GO:0000917">
    <property type="term" value="P:division septum assembly"/>
    <property type="evidence" value="ECO:0007669"/>
    <property type="project" value="UniProtKB-KW"/>
</dbReference>
<dbReference type="CDD" id="cd01876">
    <property type="entry name" value="YihA_EngB"/>
    <property type="match status" value="1"/>
</dbReference>
<dbReference type="FunFam" id="3.40.50.300:FF:000098">
    <property type="entry name" value="Probable GTP-binding protein EngB"/>
    <property type="match status" value="1"/>
</dbReference>
<dbReference type="Gene3D" id="3.40.50.300">
    <property type="entry name" value="P-loop containing nucleotide triphosphate hydrolases"/>
    <property type="match status" value="1"/>
</dbReference>
<dbReference type="HAMAP" id="MF_00321">
    <property type="entry name" value="GTPase_EngB"/>
    <property type="match status" value="1"/>
</dbReference>
<dbReference type="InterPro" id="IPR030393">
    <property type="entry name" value="G_ENGB_dom"/>
</dbReference>
<dbReference type="InterPro" id="IPR006073">
    <property type="entry name" value="GTP-bd"/>
</dbReference>
<dbReference type="InterPro" id="IPR019987">
    <property type="entry name" value="GTP-bd_ribosome_bio_YsxC"/>
</dbReference>
<dbReference type="InterPro" id="IPR027417">
    <property type="entry name" value="P-loop_NTPase"/>
</dbReference>
<dbReference type="NCBIfam" id="TIGR03598">
    <property type="entry name" value="GTPase_YsxC"/>
    <property type="match status" value="1"/>
</dbReference>
<dbReference type="PANTHER" id="PTHR11649:SF13">
    <property type="entry name" value="ENGB-TYPE G DOMAIN-CONTAINING PROTEIN"/>
    <property type="match status" value="1"/>
</dbReference>
<dbReference type="PANTHER" id="PTHR11649">
    <property type="entry name" value="MSS1/TRME-RELATED GTP-BINDING PROTEIN"/>
    <property type="match status" value="1"/>
</dbReference>
<dbReference type="Pfam" id="PF01926">
    <property type="entry name" value="MMR_HSR1"/>
    <property type="match status" value="1"/>
</dbReference>
<dbReference type="SUPFAM" id="SSF52540">
    <property type="entry name" value="P-loop containing nucleoside triphosphate hydrolases"/>
    <property type="match status" value="1"/>
</dbReference>
<dbReference type="PROSITE" id="PS51706">
    <property type="entry name" value="G_ENGB"/>
    <property type="match status" value="1"/>
</dbReference>
<keyword id="KW-0131">Cell cycle</keyword>
<keyword id="KW-0132">Cell division</keyword>
<keyword id="KW-0342">GTP-binding</keyword>
<keyword id="KW-0460">Magnesium</keyword>
<keyword id="KW-0479">Metal-binding</keyword>
<keyword id="KW-0547">Nucleotide-binding</keyword>
<keyword id="KW-1185">Reference proteome</keyword>
<keyword id="KW-0717">Septation</keyword>
<gene>
    <name evidence="1" type="primary">engB</name>
    <name type="ordered locus">EcE24377A_4383</name>
</gene>
<comment type="function">
    <text evidence="1">Necessary for normal cell division and for the maintenance of normal septation.</text>
</comment>
<comment type="cofactor">
    <cofactor evidence="1">
        <name>Mg(2+)</name>
        <dbReference type="ChEBI" id="CHEBI:18420"/>
    </cofactor>
</comment>
<comment type="similarity">
    <text evidence="1">Belongs to the TRAFAC class TrmE-Era-EngA-EngB-Septin-like GTPase superfamily. EngB GTPase family.</text>
</comment>
<evidence type="ECO:0000255" key="1">
    <source>
        <dbReference type="HAMAP-Rule" id="MF_00321"/>
    </source>
</evidence>
<proteinExistence type="inferred from homology"/>
<name>ENGB_ECO24</name>
<organism>
    <name type="scientific">Escherichia coli O139:H28 (strain E24377A / ETEC)</name>
    <dbReference type="NCBI Taxonomy" id="331111"/>
    <lineage>
        <taxon>Bacteria</taxon>
        <taxon>Pseudomonadati</taxon>
        <taxon>Pseudomonadota</taxon>
        <taxon>Gammaproteobacteria</taxon>
        <taxon>Enterobacterales</taxon>
        <taxon>Enterobacteriaceae</taxon>
        <taxon>Escherichia</taxon>
    </lineage>
</organism>